<dbReference type="EC" id="3.1.1.96" evidence="1"/>
<dbReference type="EMBL" id="CP001215">
    <property type="protein sequence ID" value="ACP17397.1"/>
    <property type="molecule type" value="Genomic_DNA"/>
</dbReference>
<dbReference type="RefSeq" id="WP_001266954.1">
    <property type="nucleotide sequence ID" value="NC_012581.1"/>
</dbReference>
<dbReference type="SMR" id="C3L611"/>
<dbReference type="KEGG" id="bah:BAMEG_4670"/>
<dbReference type="HOGENOM" id="CLU_076901_1_0_9"/>
<dbReference type="GO" id="GO:0005737">
    <property type="term" value="C:cytoplasm"/>
    <property type="evidence" value="ECO:0007669"/>
    <property type="project" value="UniProtKB-SubCell"/>
</dbReference>
<dbReference type="GO" id="GO:0051500">
    <property type="term" value="F:D-tyrosyl-tRNA(Tyr) deacylase activity"/>
    <property type="evidence" value="ECO:0007669"/>
    <property type="project" value="TreeGrafter"/>
</dbReference>
<dbReference type="GO" id="GO:0106026">
    <property type="term" value="F:Gly-tRNA(Ala) deacylase activity"/>
    <property type="evidence" value="ECO:0007669"/>
    <property type="project" value="UniProtKB-UniRule"/>
</dbReference>
<dbReference type="GO" id="GO:0043908">
    <property type="term" value="F:Ser(Gly)-tRNA(Ala) hydrolase activity"/>
    <property type="evidence" value="ECO:0007669"/>
    <property type="project" value="UniProtKB-UniRule"/>
</dbReference>
<dbReference type="GO" id="GO:0000049">
    <property type="term" value="F:tRNA binding"/>
    <property type="evidence" value="ECO:0007669"/>
    <property type="project" value="UniProtKB-UniRule"/>
</dbReference>
<dbReference type="GO" id="GO:0019478">
    <property type="term" value="P:D-amino acid catabolic process"/>
    <property type="evidence" value="ECO:0007669"/>
    <property type="project" value="UniProtKB-UniRule"/>
</dbReference>
<dbReference type="CDD" id="cd00563">
    <property type="entry name" value="Dtyr_deacylase"/>
    <property type="match status" value="1"/>
</dbReference>
<dbReference type="FunFam" id="3.50.80.10:FF:000001">
    <property type="entry name" value="D-aminoacyl-tRNA deacylase"/>
    <property type="match status" value="1"/>
</dbReference>
<dbReference type="Gene3D" id="3.50.80.10">
    <property type="entry name" value="D-tyrosyl-tRNA(Tyr) deacylase"/>
    <property type="match status" value="1"/>
</dbReference>
<dbReference type="HAMAP" id="MF_00518">
    <property type="entry name" value="Deacylase_Dtd"/>
    <property type="match status" value="1"/>
</dbReference>
<dbReference type="InterPro" id="IPR003732">
    <property type="entry name" value="Daa-tRNA_deacyls_DTD"/>
</dbReference>
<dbReference type="InterPro" id="IPR023509">
    <property type="entry name" value="DTD-like_sf"/>
</dbReference>
<dbReference type="NCBIfam" id="TIGR00256">
    <property type="entry name" value="D-aminoacyl-tRNA deacylase"/>
    <property type="match status" value="1"/>
</dbReference>
<dbReference type="PANTHER" id="PTHR10472:SF5">
    <property type="entry name" value="D-AMINOACYL-TRNA DEACYLASE 1"/>
    <property type="match status" value="1"/>
</dbReference>
<dbReference type="PANTHER" id="PTHR10472">
    <property type="entry name" value="D-TYROSYL-TRNA TYR DEACYLASE"/>
    <property type="match status" value="1"/>
</dbReference>
<dbReference type="Pfam" id="PF02580">
    <property type="entry name" value="Tyr_Deacylase"/>
    <property type="match status" value="1"/>
</dbReference>
<dbReference type="SUPFAM" id="SSF69500">
    <property type="entry name" value="DTD-like"/>
    <property type="match status" value="1"/>
</dbReference>
<gene>
    <name evidence="1" type="primary">dtd</name>
    <name type="ordered locus">BAMEG_4670</name>
</gene>
<accession>C3L611</accession>
<evidence type="ECO:0000255" key="1">
    <source>
        <dbReference type="HAMAP-Rule" id="MF_00518"/>
    </source>
</evidence>
<reference key="1">
    <citation type="submission" date="2008-10" db="EMBL/GenBank/DDBJ databases">
        <title>Genome sequence of Bacillus anthracis str. CDC 684.</title>
        <authorList>
            <person name="Dodson R.J."/>
            <person name="Munk A.C."/>
            <person name="Brettin T."/>
            <person name="Bruce D."/>
            <person name="Detter C."/>
            <person name="Tapia R."/>
            <person name="Han C."/>
            <person name="Sutton G."/>
            <person name="Sims D."/>
        </authorList>
    </citation>
    <scope>NUCLEOTIDE SEQUENCE [LARGE SCALE GENOMIC DNA]</scope>
    <source>
        <strain>CDC 684 / NRRL 3495</strain>
    </source>
</reference>
<sequence>MRVVLQRSKEASVTVDGEIVGQIPFGLTLLVGITHEDTEKDATYIAEKIANLRIFEDESGKMNHSVLDVEGQVLSISQFTLYGDCRKGRRPNFMDAAKPDYAEHLYDFFNEEVRKQGLHVETGKFGAMMDVSLINDGPVTLIVESK</sequence>
<name>DTD_BACAC</name>
<comment type="function">
    <text evidence="1">An aminoacyl-tRNA editing enzyme that deacylates mischarged D-aminoacyl-tRNAs. Also deacylates mischarged glycyl-tRNA(Ala), protecting cells against glycine mischarging by AlaRS. Acts via tRNA-based rather than protein-based catalysis; rejects L-amino acids rather than detecting D-amino acids in the active site. By recycling D-aminoacyl-tRNA to D-amino acids and free tRNA molecules, this enzyme counteracts the toxicity associated with the formation of D-aminoacyl-tRNA entities in vivo and helps enforce protein L-homochirality.</text>
</comment>
<comment type="catalytic activity">
    <reaction evidence="1">
        <text>glycyl-tRNA(Ala) + H2O = tRNA(Ala) + glycine + H(+)</text>
        <dbReference type="Rhea" id="RHEA:53744"/>
        <dbReference type="Rhea" id="RHEA-COMP:9657"/>
        <dbReference type="Rhea" id="RHEA-COMP:13640"/>
        <dbReference type="ChEBI" id="CHEBI:15377"/>
        <dbReference type="ChEBI" id="CHEBI:15378"/>
        <dbReference type="ChEBI" id="CHEBI:57305"/>
        <dbReference type="ChEBI" id="CHEBI:78442"/>
        <dbReference type="ChEBI" id="CHEBI:78522"/>
        <dbReference type="EC" id="3.1.1.96"/>
    </reaction>
</comment>
<comment type="catalytic activity">
    <reaction evidence="1">
        <text>a D-aminoacyl-tRNA + H2O = a tRNA + a D-alpha-amino acid + H(+)</text>
        <dbReference type="Rhea" id="RHEA:13953"/>
        <dbReference type="Rhea" id="RHEA-COMP:10123"/>
        <dbReference type="Rhea" id="RHEA-COMP:10124"/>
        <dbReference type="ChEBI" id="CHEBI:15377"/>
        <dbReference type="ChEBI" id="CHEBI:15378"/>
        <dbReference type="ChEBI" id="CHEBI:59871"/>
        <dbReference type="ChEBI" id="CHEBI:78442"/>
        <dbReference type="ChEBI" id="CHEBI:79333"/>
        <dbReference type="EC" id="3.1.1.96"/>
    </reaction>
</comment>
<comment type="subunit">
    <text evidence="1">Homodimer.</text>
</comment>
<comment type="subcellular location">
    <subcellularLocation>
        <location evidence="1">Cytoplasm</location>
    </subcellularLocation>
</comment>
<comment type="domain">
    <text evidence="1">A Gly-cisPro motif from one monomer fits into the active site of the other monomer to allow specific chiral rejection of L-amino acids.</text>
</comment>
<comment type="similarity">
    <text evidence="1">Belongs to the DTD family.</text>
</comment>
<protein>
    <recommendedName>
        <fullName evidence="1">D-aminoacyl-tRNA deacylase</fullName>
        <shortName evidence="1">DTD</shortName>
        <ecNumber evidence="1">3.1.1.96</ecNumber>
    </recommendedName>
    <alternativeName>
        <fullName evidence="1">Gly-tRNA(Ala) deacylase</fullName>
    </alternativeName>
</protein>
<feature type="chain" id="PRO_1000146181" description="D-aminoacyl-tRNA deacylase">
    <location>
        <begin position="1"/>
        <end position="146"/>
    </location>
</feature>
<feature type="short sequence motif" description="Gly-cisPro motif, important for rejection of L-amino acids" evidence="1">
    <location>
        <begin position="137"/>
        <end position="138"/>
    </location>
</feature>
<organism>
    <name type="scientific">Bacillus anthracis (strain CDC 684 / NRRL 3495)</name>
    <dbReference type="NCBI Taxonomy" id="568206"/>
    <lineage>
        <taxon>Bacteria</taxon>
        <taxon>Bacillati</taxon>
        <taxon>Bacillota</taxon>
        <taxon>Bacilli</taxon>
        <taxon>Bacillales</taxon>
        <taxon>Bacillaceae</taxon>
        <taxon>Bacillus</taxon>
        <taxon>Bacillus cereus group</taxon>
    </lineage>
</organism>
<keyword id="KW-0963">Cytoplasm</keyword>
<keyword id="KW-0378">Hydrolase</keyword>
<keyword id="KW-0694">RNA-binding</keyword>
<keyword id="KW-0820">tRNA-binding</keyword>
<proteinExistence type="inferred from homology"/>